<keyword id="KW-0012">Acyltransferase</keyword>
<keyword id="KW-0028">Amino-acid biosynthesis</keyword>
<keyword id="KW-0963">Cytoplasm</keyword>
<keyword id="KW-0486">Methionine biosynthesis</keyword>
<keyword id="KW-1185">Reference proteome</keyword>
<keyword id="KW-0808">Transferase</keyword>
<comment type="function">
    <text evidence="1">Transfers an acetyl group from acetyl-CoA to L-homoserine, forming acetyl-L-homoserine.</text>
</comment>
<comment type="catalytic activity">
    <reaction evidence="1">
        <text>L-homoserine + acetyl-CoA = O-acetyl-L-homoserine + CoA</text>
        <dbReference type="Rhea" id="RHEA:13701"/>
        <dbReference type="ChEBI" id="CHEBI:57287"/>
        <dbReference type="ChEBI" id="CHEBI:57288"/>
        <dbReference type="ChEBI" id="CHEBI:57476"/>
        <dbReference type="ChEBI" id="CHEBI:57716"/>
        <dbReference type="EC" id="2.3.1.31"/>
    </reaction>
</comment>
<comment type="pathway">
    <text evidence="1">Amino-acid biosynthesis; L-methionine biosynthesis via de novo pathway; O-acetyl-L-homoserine from L-homoserine: step 1/1.</text>
</comment>
<comment type="subcellular location">
    <subcellularLocation>
        <location evidence="1">Cytoplasm</location>
    </subcellularLocation>
</comment>
<comment type="similarity">
    <text evidence="1">Belongs to the MetA family.</text>
</comment>
<sequence>MPITLDKKLPAVDILKSENIFVMDDKRAIHQDIRPMSILILNLMPTKVATETQLLRLLANTPLQLSVDFLYMTSHHSKTTQAEHMKTFYKTFKDIKDNYYDGLIITGAPVETMPFEKVDYWEELCQVFQWSKTHVYSTLHLCWGAQAGLYYRYSVDKVQMTDKLSGIYLQKVNEQLSPLMRGFDDCFLSPHSRYTEVLLKDINNKTNLEILASGEKVGLSILASRDMREVYSFGHLEYDRETLDNEYKRDLKAGKSPKIPENYYQDDDVTTHPIMRWNLAAATFFSNWINYAVYQETPYRLEELEKDISFYGYL</sequence>
<organism>
    <name type="scientific">Streptococcus mutans serotype c (strain ATCC 700610 / UA159)</name>
    <dbReference type="NCBI Taxonomy" id="210007"/>
    <lineage>
        <taxon>Bacteria</taxon>
        <taxon>Bacillati</taxon>
        <taxon>Bacillota</taxon>
        <taxon>Bacilli</taxon>
        <taxon>Lactobacillales</taxon>
        <taxon>Streptococcaceae</taxon>
        <taxon>Streptococcus</taxon>
    </lineage>
</organism>
<gene>
    <name evidence="1" type="primary">metAA</name>
    <name type="ordered locus">SMU_1466</name>
</gene>
<protein>
    <recommendedName>
        <fullName evidence="1">Homoserine O-acetyltransferase</fullName>
        <shortName evidence="1">HAT</shortName>
        <ecNumber evidence="1">2.3.1.31</ecNumber>
    </recommendedName>
    <alternativeName>
        <fullName evidence="1">Homoserine transacetylase</fullName>
        <shortName evidence="1">HTA</shortName>
    </alternativeName>
</protein>
<reference key="1">
    <citation type="journal article" date="2002" name="Proc. Natl. Acad. Sci. U.S.A.">
        <title>Genome sequence of Streptococcus mutans UA159, a cariogenic dental pathogen.</title>
        <authorList>
            <person name="Ajdic D.J."/>
            <person name="McShan W.M."/>
            <person name="McLaughlin R.E."/>
            <person name="Savic G."/>
            <person name="Chang J."/>
            <person name="Carson M.B."/>
            <person name="Primeaux C."/>
            <person name="Tian R."/>
            <person name="Kenton S."/>
            <person name="Jia H.G."/>
            <person name="Lin S.P."/>
            <person name="Qian Y."/>
            <person name="Li S."/>
            <person name="Zhu H."/>
            <person name="Najar F.Z."/>
            <person name="Lai H."/>
            <person name="White J."/>
            <person name="Roe B.A."/>
            <person name="Ferretti J.J."/>
        </authorList>
    </citation>
    <scope>NUCLEOTIDE SEQUENCE [LARGE SCALE GENOMIC DNA]</scope>
    <source>
        <strain>ATCC 700610 / UA159</strain>
    </source>
</reference>
<proteinExistence type="inferred from homology"/>
<name>METAA_STRMU</name>
<evidence type="ECO:0000255" key="1">
    <source>
        <dbReference type="HAMAP-Rule" id="MF_00295"/>
    </source>
</evidence>
<dbReference type="EC" id="2.3.1.31" evidence="1"/>
<dbReference type="EMBL" id="AE014133">
    <property type="protein sequence ID" value="AAN59124.1"/>
    <property type="molecule type" value="Genomic_DNA"/>
</dbReference>
<dbReference type="RefSeq" id="NP_721818.1">
    <property type="nucleotide sequence ID" value="NC_004350.2"/>
</dbReference>
<dbReference type="SMR" id="Q8DT96"/>
<dbReference type="STRING" id="210007.SMU_1466"/>
<dbReference type="KEGG" id="smu:SMU_1466"/>
<dbReference type="PATRIC" id="fig|210007.7.peg.1304"/>
<dbReference type="eggNOG" id="COG1897">
    <property type="taxonomic scope" value="Bacteria"/>
</dbReference>
<dbReference type="HOGENOM" id="CLU_057851_0_1_9"/>
<dbReference type="OrthoDB" id="9772423at2"/>
<dbReference type="PhylomeDB" id="Q8DT96"/>
<dbReference type="UniPathway" id="UPA00051">
    <property type="reaction ID" value="UER00074"/>
</dbReference>
<dbReference type="Proteomes" id="UP000002512">
    <property type="component" value="Chromosome"/>
</dbReference>
<dbReference type="GO" id="GO:0005737">
    <property type="term" value="C:cytoplasm"/>
    <property type="evidence" value="ECO:0007669"/>
    <property type="project" value="UniProtKB-SubCell"/>
</dbReference>
<dbReference type="GO" id="GO:0004414">
    <property type="term" value="F:homoserine O-acetyltransferase activity"/>
    <property type="evidence" value="ECO:0007669"/>
    <property type="project" value="UniProtKB-EC"/>
</dbReference>
<dbReference type="GO" id="GO:0008899">
    <property type="term" value="F:homoserine O-succinyltransferase activity"/>
    <property type="evidence" value="ECO:0007669"/>
    <property type="project" value="UniProtKB-UniRule"/>
</dbReference>
<dbReference type="GO" id="GO:0019281">
    <property type="term" value="P:L-methionine biosynthetic process from homoserine via O-succinyl-L-homoserine and cystathionine"/>
    <property type="evidence" value="ECO:0007669"/>
    <property type="project" value="InterPro"/>
</dbReference>
<dbReference type="CDD" id="cd03131">
    <property type="entry name" value="GATase1_HTS"/>
    <property type="match status" value="1"/>
</dbReference>
<dbReference type="FunFam" id="3.40.50.880:FF:000004">
    <property type="entry name" value="Homoserine O-succinyltransferase"/>
    <property type="match status" value="1"/>
</dbReference>
<dbReference type="Gene3D" id="3.40.50.880">
    <property type="match status" value="1"/>
</dbReference>
<dbReference type="HAMAP" id="MF_00295">
    <property type="entry name" value="MetA_acyltransf"/>
    <property type="match status" value="1"/>
</dbReference>
<dbReference type="InterPro" id="IPR029062">
    <property type="entry name" value="Class_I_gatase-like"/>
</dbReference>
<dbReference type="InterPro" id="IPR005697">
    <property type="entry name" value="HST_MetA"/>
</dbReference>
<dbReference type="InterPro" id="IPR033752">
    <property type="entry name" value="MetA_family"/>
</dbReference>
<dbReference type="NCBIfam" id="TIGR01001">
    <property type="entry name" value="metA"/>
    <property type="match status" value="1"/>
</dbReference>
<dbReference type="PANTHER" id="PTHR20919">
    <property type="entry name" value="HOMOSERINE O-SUCCINYLTRANSFERASE"/>
    <property type="match status" value="1"/>
</dbReference>
<dbReference type="PANTHER" id="PTHR20919:SF0">
    <property type="entry name" value="HOMOSERINE O-SUCCINYLTRANSFERASE"/>
    <property type="match status" value="1"/>
</dbReference>
<dbReference type="Pfam" id="PF04204">
    <property type="entry name" value="HTS"/>
    <property type="match status" value="1"/>
</dbReference>
<dbReference type="PIRSF" id="PIRSF000450">
    <property type="entry name" value="H_ser_succinyltr"/>
    <property type="match status" value="1"/>
</dbReference>
<dbReference type="SUPFAM" id="SSF52317">
    <property type="entry name" value="Class I glutamine amidotransferase-like"/>
    <property type="match status" value="1"/>
</dbReference>
<feature type="chain" id="PRO_0000199760" description="Homoserine O-acetyltransferase">
    <location>
        <begin position="1"/>
        <end position="314"/>
    </location>
</feature>
<feature type="active site" description="Acyl-thioester intermediate" evidence="1">
    <location>
        <position position="142"/>
    </location>
</feature>
<feature type="active site" description="Proton acceptor" evidence="1">
    <location>
        <position position="235"/>
    </location>
</feature>
<feature type="active site" evidence="1">
    <location>
        <position position="237"/>
    </location>
</feature>
<feature type="binding site" evidence="1">
    <location>
        <position position="163"/>
    </location>
    <ligand>
        <name>substrate</name>
    </ligand>
</feature>
<feature type="binding site" evidence="1">
    <location>
        <position position="192"/>
    </location>
    <ligand>
        <name>substrate</name>
    </ligand>
</feature>
<feature type="binding site" evidence="1">
    <location>
        <position position="249"/>
    </location>
    <ligand>
        <name>substrate</name>
    </ligand>
</feature>
<feature type="site" description="Important for acyl-CoA specificity" evidence="1">
    <location>
        <position position="111"/>
    </location>
</feature>
<feature type="site" description="Important for substrate specificity" evidence="1">
    <location>
        <position position="192"/>
    </location>
</feature>
<accession>Q8DT96</accession>